<comment type="function">
    <text evidence="1">Catalyzes the attachment of isoleucine to tRNA(Ile). As IleRS can inadvertently accommodate and process structurally similar amino acids such as valine, to avoid such errors it has two additional distinct tRNA(Ile)-dependent editing activities. One activity is designated as 'pretransfer' editing and involves the hydrolysis of activated Val-AMP. The other activity is designated 'posttransfer' editing and involves deacylation of mischarged Val-tRNA(Ile).</text>
</comment>
<comment type="catalytic activity">
    <reaction evidence="1">
        <text>tRNA(Ile) + L-isoleucine + ATP = L-isoleucyl-tRNA(Ile) + AMP + diphosphate</text>
        <dbReference type="Rhea" id="RHEA:11060"/>
        <dbReference type="Rhea" id="RHEA-COMP:9666"/>
        <dbReference type="Rhea" id="RHEA-COMP:9695"/>
        <dbReference type="ChEBI" id="CHEBI:30616"/>
        <dbReference type="ChEBI" id="CHEBI:33019"/>
        <dbReference type="ChEBI" id="CHEBI:58045"/>
        <dbReference type="ChEBI" id="CHEBI:78442"/>
        <dbReference type="ChEBI" id="CHEBI:78528"/>
        <dbReference type="ChEBI" id="CHEBI:456215"/>
        <dbReference type="EC" id="6.1.1.5"/>
    </reaction>
</comment>
<comment type="cofactor">
    <cofactor evidence="1">
        <name>Zn(2+)</name>
        <dbReference type="ChEBI" id="CHEBI:29105"/>
    </cofactor>
    <text evidence="1">Binds 1 zinc ion per subunit.</text>
</comment>
<comment type="subunit">
    <text evidence="1">Monomer.</text>
</comment>
<comment type="subcellular location">
    <subcellularLocation>
        <location evidence="1">Cytoplasm</location>
    </subcellularLocation>
</comment>
<comment type="domain">
    <text evidence="1">IleRS has two distinct active sites: one for aminoacylation and one for editing. The misactivated valine is translocated from the active site to the editing site, which sterically excludes the correctly activated isoleucine. The single editing site contains two valyl binding pockets, one specific for each substrate (Val-AMP or Val-tRNA(Ile)).</text>
</comment>
<comment type="similarity">
    <text evidence="1">Belongs to the class-I aminoacyl-tRNA synthetase family. IleS type 1 subfamily.</text>
</comment>
<proteinExistence type="inferred from homology"/>
<organism>
    <name type="scientific">Stenotrophomonas maltophilia (strain K279a)</name>
    <dbReference type="NCBI Taxonomy" id="522373"/>
    <lineage>
        <taxon>Bacteria</taxon>
        <taxon>Pseudomonadati</taxon>
        <taxon>Pseudomonadota</taxon>
        <taxon>Gammaproteobacteria</taxon>
        <taxon>Lysobacterales</taxon>
        <taxon>Lysobacteraceae</taxon>
        <taxon>Stenotrophomonas</taxon>
        <taxon>Stenotrophomonas maltophilia group</taxon>
    </lineage>
</organism>
<keyword id="KW-0030">Aminoacyl-tRNA synthetase</keyword>
<keyword id="KW-0067">ATP-binding</keyword>
<keyword id="KW-0963">Cytoplasm</keyword>
<keyword id="KW-0436">Ligase</keyword>
<keyword id="KW-0479">Metal-binding</keyword>
<keyword id="KW-0547">Nucleotide-binding</keyword>
<keyword id="KW-0648">Protein biosynthesis</keyword>
<keyword id="KW-1185">Reference proteome</keyword>
<keyword id="KW-0862">Zinc</keyword>
<protein>
    <recommendedName>
        <fullName evidence="1">Isoleucine--tRNA ligase</fullName>
        <ecNumber evidence="1">6.1.1.5</ecNumber>
    </recommendedName>
    <alternativeName>
        <fullName evidence="1">Isoleucyl-tRNA synthetase</fullName>
        <shortName evidence="1">IleRS</shortName>
    </alternativeName>
</protein>
<gene>
    <name evidence="1" type="primary">ileS</name>
    <name type="ordered locus">Smlt1340</name>
</gene>
<evidence type="ECO:0000255" key="1">
    <source>
        <dbReference type="HAMAP-Rule" id="MF_02002"/>
    </source>
</evidence>
<dbReference type="EC" id="6.1.1.5" evidence="1"/>
<dbReference type="EMBL" id="AM743169">
    <property type="protein sequence ID" value="CAQ44887.1"/>
    <property type="molecule type" value="Genomic_DNA"/>
</dbReference>
<dbReference type="RefSeq" id="WP_012479507.1">
    <property type="nucleotide sequence ID" value="NC_010943.1"/>
</dbReference>
<dbReference type="SMR" id="B2FTJ0"/>
<dbReference type="EnsemblBacteria" id="CAQ44887">
    <property type="protein sequence ID" value="CAQ44887"/>
    <property type="gene ID" value="Smlt1340"/>
</dbReference>
<dbReference type="KEGG" id="sml:Smlt1340"/>
<dbReference type="PATRIC" id="fig|522373.3.peg.1288"/>
<dbReference type="eggNOG" id="COG0060">
    <property type="taxonomic scope" value="Bacteria"/>
</dbReference>
<dbReference type="HOGENOM" id="CLU_001493_7_1_6"/>
<dbReference type="Proteomes" id="UP000008840">
    <property type="component" value="Chromosome"/>
</dbReference>
<dbReference type="GO" id="GO:0005829">
    <property type="term" value="C:cytosol"/>
    <property type="evidence" value="ECO:0007669"/>
    <property type="project" value="TreeGrafter"/>
</dbReference>
<dbReference type="GO" id="GO:0002161">
    <property type="term" value="F:aminoacyl-tRNA deacylase activity"/>
    <property type="evidence" value="ECO:0007669"/>
    <property type="project" value="InterPro"/>
</dbReference>
<dbReference type="GO" id="GO:0005524">
    <property type="term" value="F:ATP binding"/>
    <property type="evidence" value="ECO:0007669"/>
    <property type="project" value="UniProtKB-UniRule"/>
</dbReference>
<dbReference type="GO" id="GO:0004822">
    <property type="term" value="F:isoleucine-tRNA ligase activity"/>
    <property type="evidence" value="ECO:0007669"/>
    <property type="project" value="UniProtKB-UniRule"/>
</dbReference>
<dbReference type="GO" id="GO:0000049">
    <property type="term" value="F:tRNA binding"/>
    <property type="evidence" value="ECO:0007669"/>
    <property type="project" value="InterPro"/>
</dbReference>
<dbReference type="GO" id="GO:0008270">
    <property type="term" value="F:zinc ion binding"/>
    <property type="evidence" value="ECO:0007669"/>
    <property type="project" value="UniProtKB-UniRule"/>
</dbReference>
<dbReference type="GO" id="GO:0006428">
    <property type="term" value="P:isoleucyl-tRNA aminoacylation"/>
    <property type="evidence" value="ECO:0007669"/>
    <property type="project" value="UniProtKB-UniRule"/>
</dbReference>
<dbReference type="CDD" id="cd07960">
    <property type="entry name" value="Anticodon_Ia_Ile_BEm"/>
    <property type="match status" value="1"/>
</dbReference>
<dbReference type="FunFam" id="1.10.730.20:FF:000001">
    <property type="entry name" value="Isoleucine--tRNA ligase"/>
    <property type="match status" value="1"/>
</dbReference>
<dbReference type="FunFam" id="3.40.50.620:FF:000042">
    <property type="entry name" value="Isoleucine--tRNA ligase"/>
    <property type="match status" value="1"/>
</dbReference>
<dbReference type="FunFam" id="3.40.50.620:FF:000048">
    <property type="entry name" value="Isoleucine--tRNA ligase"/>
    <property type="match status" value="1"/>
</dbReference>
<dbReference type="FunFam" id="3.90.740.10:FF:000022">
    <property type="entry name" value="Isoleucine--tRNA ligase"/>
    <property type="match status" value="1"/>
</dbReference>
<dbReference type="Gene3D" id="1.10.730.20">
    <property type="match status" value="1"/>
</dbReference>
<dbReference type="Gene3D" id="3.40.50.620">
    <property type="entry name" value="HUPs"/>
    <property type="match status" value="2"/>
</dbReference>
<dbReference type="Gene3D" id="1.10.10.830">
    <property type="entry name" value="Ile-tRNA synthetase CP2 domain-like"/>
    <property type="match status" value="1"/>
</dbReference>
<dbReference type="Gene3D" id="3.90.740.10">
    <property type="entry name" value="Valyl/Leucyl/Isoleucyl-tRNA synthetase, editing domain"/>
    <property type="match status" value="1"/>
</dbReference>
<dbReference type="HAMAP" id="MF_02002">
    <property type="entry name" value="Ile_tRNA_synth_type1"/>
    <property type="match status" value="1"/>
</dbReference>
<dbReference type="InterPro" id="IPR001412">
    <property type="entry name" value="aa-tRNA-synth_I_CS"/>
</dbReference>
<dbReference type="InterPro" id="IPR002300">
    <property type="entry name" value="aa-tRNA-synth_Ia"/>
</dbReference>
<dbReference type="InterPro" id="IPR033708">
    <property type="entry name" value="Anticodon_Ile_BEm"/>
</dbReference>
<dbReference type="InterPro" id="IPR002301">
    <property type="entry name" value="Ile-tRNA-ligase"/>
</dbReference>
<dbReference type="InterPro" id="IPR023585">
    <property type="entry name" value="Ile-tRNA-ligase_type1"/>
</dbReference>
<dbReference type="InterPro" id="IPR050081">
    <property type="entry name" value="Ile-tRNA_ligase"/>
</dbReference>
<dbReference type="InterPro" id="IPR013155">
    <property type="entry name" value="M/V/L/I-tRNA-synth_anticd-bd"/>
</dbReference>
<dbReference type="InterPro" id="IPR014729">
    <property type="entry name" value="Rossmann-like_a/b/a_fold"/>
</dbReference>
<dbReference type="InterPro" id="IPR009080">
    <property type="entry name" value="tRNAsynth_Ia_anticodon-bd"/>
</dbReference>
<dbReference type="InterPro" id="IPR009008">
    <property type="entry name" value="Val/Leu/Ile-tRNA-synth_edit"/>
</dbReference>
<dbReference type="InterPro" id="IPR010663">
    <property type="entry name" value="Znf_FPG/IleRS"/>
</dbReference>
<dbReference type="NCBIfam" id="TIGR00392">
    <property type="entry name" value="ileS"/>
    <property type="match status" value="1"/>
</dbReference>
<dbReference type="PANTHER" id="PTHR42765:SF1">
    <property type="entry name" value="ISOLEUCINE--TRNA LIGASE, MITOCHONDRIAL"/>
    <property type="match status" value="1"/>
</dbReference>
<dbReference type="PANTHER" id="PTHR42765">
    <property type="entry name" value="SOLEUCYL-TRNA SYNTHETASE"/>
    <property type="match status" value="1"/>
</dbReference>
<dbReference type="Pfam" id="PF08264">
    <property type="entry name" value="Anticodon_1"/>
    <property type="match status" value="1"/>
</dbReference>
<dbReference type="Pfam" id="PF00133">
    <property type="entry name" value="tRNA-synt_1"/>
    <property type="match status" value="1"/>
</dbReference>
<dbReference type="Pfam" id="PF06827">
    <property type="entry name" value="zf-FPG_IleRS"/>
    <property type="match status" value="1"/>
</dbReference>
<dbReference type="PRINTS" id="PR00984">
    <property type="entry name" value="TRNASYNTHILE"/>
</dbReference>
<dbReference type="SUPFAM" id="SSF47323">
    <property type="entry name" value="Anticodon-binding domain of a subclass of class I aminoacyl-tRNA synthetases"/>
    <property type="match status" value="1"/>
</dbReference>
<dbReference type="SUPFAM" id="SSF52374">
    <property type="entry name" value="Nucleotidylyl transferase"/>
    <property type="match status" value="1"/>
</dbReference>
<dbReference type="SUPFAM" id="SSF50677">
    <property type="entry name" value="ValRS/IleRS/LeuRS editing domain"/>
    <property type="match status" value="1"/>
</dbReference>
<dbReference type="PROSITE" id="PS00178">
    <property type="entry name" value="AA_TRNA_LIGASE_I"/>
    <property type="match status" value="1"/>
</dbReference>
<feature type="chain" id="PRO_1000189200" description="Isoleucine--tRNA ligase">
    <location>
        <begin position="1"/>
        <end position="943"/>
    </location>
</feature>
<feature type="short sequence motif" description="'HIGH' region">
    <location>
        <begin position="59"/>
        <end position="69"/>
    </location>
</feature>
<feature type="short sequence motif" description="'KMSKS' region">
    <location>
        <begin position="618"/>
        <end position="622"/>
    </location>
</feature>
<feature type="binding site" evidence="1">
    <location>
        <position position="577"/>
    </location>
    <ligand>
        <name>L-isoleucyl-5'-AMP</name>
        <dbReference type="ChEBI" id="CHEBI:178002"/>
    </ligand>
</feature>
<feature type="binding site" evidence="1">
    <location>
        <position position="621"/>
    </location>
    <ligand>
        <name>ATP</name>
        <dbReference type="ChEBI" id="CHEBI:30616"/>
    </ligand>
</feature>
<feature type="binding site" evidence="1">
    <location>
        <position position="906"/>
    </location>
    <ligand>
        <name>Zn(2+)</name>
        <dbReference type="ChEBI" id="CHEBI:29105"/>
    </ligand>
</feature>
<feature type="binding site" evidence="1">
    <location>
        <position position="909"/>
    </location>
    <ligand>
        <name>Zn(2+)</name>
        <dbReference type="ChEBI" id="CHEBI:29105"/>
    </ligand>
</feature>
<feature type="binding site" evidence="1">
    <location>
        <position position="926"/>
    </location>
    <ligand>
        <name>Zn(2+)</name>
        <dbReference type="ChEBI" id="CHEBI:29105"/>
    </ligand>
</feature>
<feature type="binding site" evidence="1">
    <location>
        <position position="929"/>
    </location>
    <ligand>
        <name>Zn(2+)</name>
        <dbReference type="ChEBI" id="CHEBI:29105"/>
    </ligand>
</feature>
<accession>B2FTJ0</accession>
<sequence>MSQDYKTTLNLPATEFPMRGDLPKREPGILARWEAQGLYQQLRDNAAGRPLFVLHDGPPYANGRIHLGHAVNKILKDIIVKSRYLAGFDAPYVPGWDCHGLPIEIAVEKKWGKVGTKLDAVEFRQKCREFAEEQINIQRVDFKRLGVTGDWDNPYKTLSFDFEANEIRALSKVVANGHLVRGAKPVYWCFDCGSALAEAEIEYQEKESPAIDVAYAARDAQAIGQAFGVSVPADVEVAVPIWTTTPWTLPASLAVSLGAEITYVLAEGPAHNGKRRWLVLAAALAERALQRYGVENLVLHGETTGAALENQLLAHPFYPEREILVLNGDHVSDEDGTGAVHTAPGHGQEDFVVSQKYGLLDKYNAGQVTPIDGRGVYLESTPPAGDVVLAGQHLWKAQEAIVGVLRDNGSLLAFHPIRHSYPHCWRHKTPVVFRATPQWFISMDKANLRNDALAAIDTVGWFPTWGKARIQSMVDGRPDWTISRQRTWGVPIALFTHRQTGEIHPRSVELMQQVADRVEAEGIDVWYSLDATELLGAEAADYEKVTDILDVWFDSGVTHEGVLAARGFGKPADLYLEGSDQHRGWFQSSLLTGVAIDKRAPYKQCLTHGFTVDEHGRKMSKSLGNGIEPQDIMNKLGADILRLWIASADYSNEMSLSQEILKRNADAYRRLRNTARFLLGNLDGFDPAQHLRPLDQMVALDRWIVHRAWELQEKIKAAYDGYNMAEIVQLLLNFCSVDLGSLYLDVTKDRLYTMPTDSHGRRSAQSAMYHIAEAFTRWVAPILTFTADELWGYLPGEHAGHVLFTTWYDGLAPLPADAQLNATDFDQLLAVREQVAKVLEPMRANGAIGAALEAEITIAANEEQAAKWQPLADELRFLFISGDVQVRPATTDEVFVSAQPTTKAKCVRCWHHRADVGRNADHPELCGRCVSNVTGAGEVRSWF</sequence>
<reference key="1">
    <citation type="journal article" date="2008" name="Genome Biol.">
        <title>The complete genome, comparative and functional analysis of Stenotrophomonas maltophilia reveals an organism heavily shielded by drug resistance determinants.</title>
        <authorList>
            <person name="Crossman L.C."/>
            <person name="Gould V.C."/>
            <person name="Dow J.M."/>
            <person name="Vernikos G.S."/>
            <person name="Okazaki A."/>
            <person name="Sebaihia M."/>
            <person name="Saunders D."/>
            <person name="Arrowsmith C."/>
            <person name="Carver T."/>
            <person name="Peters N."/>
            <person name="Adlem E."/>
            <person name="Kerhornou A."/>
            <person name="Lord A."/>
            <person name="Murphy L."/>
            <person name="Seeger K."/>
            <person name="Squares R."/>
            <person name="Rutter S."/>
            <person name="Quail M.A."/>
            <person name="Rajandream M.A."/>
            <person name="Harris D."/>
            <person name="Churcher C."/>
            <person name="Bentley S.D."/>
            <person name="Parkhill J."/>
            <person name="Thomson N.R."/>
            <person name="Avison M.B."/>
        </authorList>
    </citation>
    <scope>NUCLEOTIDE SEQUENCE [LARGE SCALE GENOMIC DNA]</scope>
    <source>
        <strain>K279a</strain>
    </source>
</reference>
<name>SYI_STRMK</name>